<name>RS21_HAEIN</name>
<sequence length="71" mass="8462">MPVIKVRENESFDVALRRFKRSCEKAGILAEVRAREFYEKPTTIRKRENATLAKRHAKRNARENARNTRLY</sequence>
<dbReference type="EMBL" id="L42023">
    <property type="protein sequence ID" value="AAC22188.1"/>
    <property type="molecule type" value="Genomic_DNA"/>
</dbReference>
<dbReference type="EMBL" id="L01756">
    <property type="status" value="NOT_ANNOTATED_CDS"/>
    <property type="molecule type" value="Genomic_DNA"/>
</dbReference>
<dbReference type="PIR" id="I64074">
    <property type="entry name" value="I64074"/>
</dbReference>
<dbReference type="RefSeq" id="NP_438689.1">
    <property type="nucleotide sequence ID" value="NC_000907.1"/>
</dbReference>
<dbReference type="SMR" id="P44386"/>
<dbReference type="STRING" id="71421.HI_0531"/>
<dbReference type="EnsemblBacteria" id="AAC22188">
    <property type="protein sequence ID" value="AAC22188"/>
    <property type="gene ID" value="HI_0531"/>
</dbReference>
<dbReference type="KEGG" id="hin:HI_0531"/>
<dbReference type="PATRIC" id="fig|71421.8.peg.550"/>
<dbReference type="eggNOG" id="COG0828">
    <property type="taxonomic scope" value="Bacteria"/>
</dbReference>
<dbReference type="HOGENOM" id="CLU_159258_1_0_6"/>
<dbReference type="OrthoDB" id="9799244at2"/>
<dbReference type="PhylomeDB" id="P44386"/>
<dbReference type="BioCyc" id="HINF71421:G1GJ1-544-MONOMER"/>
<dbReference type="Proteomes" id="UP000000579">
    <property type="component" value="Chromosome"/>
</dbReference>
<dbReference type="GO" id="GO:1990904">
    <property type="term" value="C:ribonucleoprotein complex"/>
    <property type="evidence" value="ECO:0007669"/>
    <property type="project" value="UniProtKB-KW"/>
</dbReference>
<dbReference type="GO" id="GO:0005840">
    <property type="term" value="C:ribosome"/>
    <property type="evidence" value="ECO:0007669"/>
    <property type="project" value="UniProtKB-KW"/>
</dbReference>
<dbReference type="GO" id="GO:0003735">
    <property type="term" value="F:structural constituent of ribosome"/>
    <property type="evidence" value="ECO:0007669"/>
    <property type="project" value="InterPro"/>
</dbReference>
<dbReference type="GO" id="GO:0006412">
    <property type="term" value="P:translation"/>
    <property type="evidence" value="ECO:0007669"/>
    <property type="project" value="UniProtKB-UniRule"/>
</dbReference>
<dbReference type="Gene3D" id="1.20.5.1150">
    <property type="entry name" value="Ribosomal protein S8"/>
    <property type="match status" value="1"/>
</dbReference>
<dbReference type="HAMAP" id="MF_00358">
    <property type="entry name" value="Ribosomal_bS21"/>
    <property type="match status" value="1"/>
</dbReference>
<dbReference type="InterPro" id="IPR001911">
    <property type="entry name" value="Ribosomal_bS21"/>
</dbReference>
<dbReference type="InterPro" id="IPR018278">
    <property type="entry name" value="Ribosomal_bS21_CS"/>
</dbReference>
<dbReference type="InterPro" id="IPR038380">
    <property type="entry name" value="Ribosomal_bS21_sf"/>
</dbReference>
<dbReference type="NCBIfam" id="TIGR00030">
    <property type="entry name" value="S21p"/>
    <property type="match status" value="1"/>
</dbReference>
<dbReference type="PANTHER" id="PTHR21109">
    <property type="entry name" value="MITOCHONDRIAL 28S RIBOSOMAL PROTEIN S21"/>
    <property type="match status" value="1"/>
</dbReference>
<dbReference type="PANTHER" id="PTHR21109:SF22">
    <property type="entry name" value="SMALL RIBOSOMAL SUBUNIT PROTEIN BS21"/>
    <property type="match status" value="1"/>
</dbReference>
<dbReference type="Pfam" id="PF01165">
    <property type="entry name" value="Ribosomal_S21"/>
    <property type="match status" value="1"/>
</dbReference>
<dbReference type="PRINTS" id="PR00976">
    <property type="entry name" value="RIBOSOMALS21"/>
</dbReference>
<dbReference type="PROSITE" id="PS01181">
    <property type="entry name" value="RIBOSOMAL_S21"/>
    <property type="match status" value="1"/>
</dbReference>
<protein>
    <recommendedName>
        <fullName evidence="3">Small ribosomal subunit protein bS21</fullName>
    </recommendedName>
    <alternativeName>
        <fullName>30S ribosomal protein S21</fullName>
    </alternativeName>
</protein>
<organism>
    <name type="scientific">Haemophilus influenzae (strain ATCC 51907 / DSM 11121 / KW20 / Rd)</name>
    <dbReference type="NCBI Taxonomy" id="71421"/>
    <lineage>
        <taxon>Bacteria</taxon>
        <taxon>Pseudomonadati</taxon>
        <taxon>Pseudomonadota</taxon>
        <taxon>Gammaproteobacteria</taxon>
        <taxon>Pasteurellales</taxon>
        <taxon>Pasteurellaceae</taxon>
        <taxon>Haemophilus</taxon>
    </lineage>
</organism>
<reference key="1">
    <citation type="journal article" date="1995" name="Science">
        <title>Whole-genome random sequencing and assembly of Haemophilus influenzae Rd.</title>
        <authorList>
            <person name="Fleischmann R.D."/>
            <person name="Adams M.D."/>
            <person name="White O."/>
            <person name="Clayton R.A."/>
            <person name="Kirkness E.F."/>
            <person name="Kerlavage A.R."/>
            <person name="Bult C.J."/>
            <person name="Tomb J.-F."/>
            <person name="Dougherty B.A."/>
            <person name="Merrick J.M."/>
            <person name="McKenney K."/>
            <person name="Sutton G.G."/>
            <person name="FitzHugh W."/>
            <person name="Fields C.A."/>
            <person name="Gocayne J.D."/>
            <person name="Scott J.D."/>
            <person name="Shirley R."/>
            <person name="Liu L.-I."/>
            <person name="Glodek A."/>
            <person name="Kelley J.M."/>
            <person name="Weidman J.F."/>
            <person name="Phillips C.A."/>
            <person name="Spriggs T."/>
            <person name="Hedblom E."/>
            <person name="Cotton M.D."/>
            <person name="Utterback T.R."/>
            <person name="Hanna M.C."/>
            <person name="Nguyen D.T."/>
            <person name="Saudek D.M."/>
            <person name="Brandon R.C."/>
            <person name="Fine L.D."/>
            <person name="Fritchman J.L."/>
            <person name="Fuhrmann J.L."/>
            <person name="Geoghagen N.S.M."/>
            <person name="Gnehm C.L."/>
            <person name="McDonald L.A."/>
            <person name="Small K.V."/>
            <person name="Fraser C.M."/>
            <person name="Smith H.O."/>
            <person name="Venter J.C."/>
        </authorList>
    </citation>
    <scope>NUCLEOTIDE SEQUENCE [LARGE SCALE GENOMIC DNA]</scope>
    <source>
        <strain>ATCC 51907 / DSM 11121 / KW20 / Rd</strain>
    </source>
</reference>
<reference key="2">
    <citation type="journal article" date="1993" name="Mol. Microbiol.">
        <title>Conservation and evolution of the rpsU-dnaG-rpoD macromolecular synthesis operon in bacteria.</title>
        <authorList>
            <person name="Versalovic J."/>
            <person name="Lupski J.R."/>
        </authorList>
    </citation>
    <scope>NUCLEOTIDE SEQUENCE [GENOMIC DNA] OF 9-71</scope>
    <source>
        <strain>Isolate 1775</strain>
    </source>
</reference>
<comment type="similarity">
    <text evidence="3">Belongs to the bacterial ribosomal protein bS21 family.</text>
</comment>
<keyword id="KW-1185">Reference proteome</keyword>
<keyword id="KW-0687">Ribonucleoprotein</keyword>
<keyword id="KW-0689">Ribosomal protein</keyword>
<feature type="initiator methionine" description="Removed" evidence="1">
    <location>
        <position position="1"/>
    </location>
</feature>
<feature type="chain" id="PRO_0000178339" description="Small ribosomal subunit protein bS21">
    <location>
        <begin position="2"/>
        <end position="71"/>
    </location>
</feature>
<feature type="region of interest" description="Disordered" evidence="2">
    <location>
        <begin position="48"/>
        <end position="71"/>
    </location>
</feature>
<feature type="compositionally biased region" description="Basic and acidic residues" evidence="2">
    <location>
        <begin position="60"/>
        <end position="71"/>
    </location>
</feature>
<feature type="sequence conflict" description="In Ref. 2." evidence="3" ref="2">
    <original>V</original>
    <variation>I</variation>
    <location>
        <position position="32"/>
    </location>
</feature>
<evidence type="ECO:0000250" key="1"/>
<evidence type="ECO:0000256" key="2">
    <source>
        <dbReference type="SAM" id="MobiDB-lite"/>
    </source>
</evidence>
<evidence type="ECO:0000305" key="3"/>
<gene>
    <name type="primary">rpsU</name>
    <name type="synonym">rps21</name>
    <name type="ordered locus">HI_0531</name>
</gene>
<proteinExistence type="inferred from homology"/>
<accession>P44386</accession>